<protein>
    <recommendedName>
        <fullName evidence="1">Valine--tRNA ligase</fullName>
        <ecNumber evidence="1">6.1.1.9</ecNumber>
    </recommendedName>
    <alternativeName>
        <fullName evidence="1">Valyl-tRNA synthetase</fullName>
        <shortName evidence="1">ValRS</shortName>
    </alternativeName>
</protein>
<dbReference type="EC" id="6.1.1.9" evidence="1"/>
<dbReference type="EMBL" id="CP000850">
    <property type="protein sequence ID" value="ABV95955.1"/>
    <property type="molecule type" value="Genomic_DNA"/>
</dbReference>
<dbReference type="SMR" id="A8LVI6"/>
<dbReference type="STRING" id="391037.Sare_0019"/>
<dbReference type="KEGG" id="saq:Sare_0019"/>
<dbReference type="PATRIC" id="fig|391037.6.peg.19"/>
<dbReference type="eggNOG" id="COG0525">
    <property type="taxonomic scope" value="Bacteria"/>
</dbReference>
<dbReference type="HOGENOM" id="CLU_001493_0_2_11"/>
<dbReference type="OrthoDB" id="9810365at2"/>
<dbReference type="GO" id="GO:0005829">
    <property type="term" value="C:cytosol"/>
    <property type="evidence" value="ECO:0007669"/>
    <property type="project" value="TreeGrafter"/>
</dbReference>
<dbReference type="GO" id="GO:0002161">
    <property type="term" value="F:aminoacyl-tRNA deacylase activity"/>
    <property type="evidence" value="ECO:0007669"/>
    <property type="project" value="InterPro"/>
</dbReference>
<dbReference type="GO" id="GO:0005524">
    <property type="term" value="F:ATP binding"/>
    <property type="evidence" value="ECO:0007669"/>
    <property type="project" value="UniProtKB-UniRule"/>
</dbReference>
<dbReference type="GO" id="GO:0004832">
    <property type="term" value="F:valine-tRNA ligase activity"/>
    <property type="evidence" value="ECO:0007669"/>
    <property type="project" value="UniProtKB-UniRule"/>
</dbReference>
<dbReference type="GO" id="GO:0006438">
    <property type="term" value="P:valyl-tRNA aminoacylation"/>
    <property type="evidence" value="ECO:0007669"/>
    <property type="project" value="UniProtKB-UniRule"/>
</dbReference>
<dbReference type="CDD" id="cd07962">
    <property type="entry name" value="Anticodon_Ia_Val"/>
    <property type="match status" value="1"/>
</dbReference>
<dbReference type="Gene3D" id="3.40.50.620">
    <property type="entry name" value="HUPs"/>
    <property type="match status" value="2"/>
</dbReference>
<dbReference type="Gene3D" id="1.10.730.10">
    <property type="entry name" value="Isoleucyl-tRNA Synthetase, Domain 1"/>
    <property type="match status" value="1"/>
</dbReference>
<dbReference type="Gene3D" id="3.90.740.10">
    <property type="entry name" value="Valyl/Leucyl/Isoleucyl-tRNA synthetase, editing domain"/>
    <property type="match status" value="1"/>
</dbReference>
<dbReference type="HAMAP" id="MF_02005">
    <property type="entry name" value="Val_tRNA_synth_type2"/>
    <property type="match status" value="1"/>
</dbReference>
<dbReference type="InterPro" id="IPR001412">
    <property type="entry name" value="aa-tRNA-synth_I_CS"/>
</dbReference>
<dbReference type="InterPro" id="IPR002300">
    <property type="entry name" value="aa-tRNA-synth_Ia"/>
</dbReference>
<dbReference type="InterPro" id="IPR033705">
    <property type="entry name" value="Anticodon_Ia_Val"/>
</dbReference>
<dbReference type="InterPro" id="IPR013155">
    <property type="entry name" value="M/V/L/I-tRNA-synth_anticd-bd"/>
</dbReference>
<dbReference type="InterPro" id="IPR014729">
    <property type="entry name" value="Rossmann-like_a/b/a_fold"/>
</dbReference>
<dbReference type="InterPro" id="IPR009080">
    <property type="entry name" value="tRNAsynth_Ia_anticodon-bd"/>
</dbReference>
<dbReference type="InterPro" id="IPR009008">
    <property type="entry name" value="Val/Leu/Ile-tRNA-synth_edit"/>
</dbReference>
<dbReference type="InterPro" id="IPR022874">
    <property type="entry name" value="Valine-tRNA_ligase_type_2"/>
</dbReference>
<dbReference type="InterPro" id="IPR002303">
    <property type="entry name" value="Valyl-tRNA_ligase"/>
</dbReference>
<dbReference type="InterPro" id="IPR048044">
    <property type="entry name" value="Valyl-tRNA_ligase_actino"/>
</dbReference>
<dbReference type="NCBIfam" id="NF000540">
    <property type="entry name" value="alt_ValS"/>
    <property type="match status" value="1"/>
</dbReference>
<dbReference type="NCBIfam" id="NF009687">
    <property type="entry name" value="PRK13208.1"/>
    <property type="match status" value="1"/>
</dbReference>
<dbReference type="PANTHER" id="PTHR11946:SF93">
    <property type="entry name" value="VALINE--TRNA LIGASE, CHLOROPLASTIC_MITOCHONDRIAL 2"/>
    <property type="match status" value="1"/>
</dbReference>
<dbReference type="PANTHER" id="PTHR11946">
    <property type="entry name" value="VALYL-TRNA SYNTHETASES"/>
    <property type="match status" value="1"/>
</dbReference>
<dbReference type="Pfam" id="PF08264">
    <property type="entry name" value="Anticodon_1"/>
    <property type="match status" value="1"/>
</dbReference>
<dbReference type="Pfam" id="PF00133">
    <property type="entry name" value="tRNA-synt_1"/>
    <property type="match status" value="1"/>
</dbReference>
<dbReference type="PRINTS" id="PR00986">
    <property type="entry name" value="TRNASYNTHVAL"/>
</dbReference>
<dbReference type="SUPFAM" id="SSF47323">
    <property type="entry name" value="Anticodon-binding domain of a subclass of class I aminoacyl-tRNA synthetases"/>
    <property type="match status" value="1"/>
</dbReference>
<dbReference type="SUPFAM" id="SSF52374">
    <property type="entry name" value="Nucleotidylyl transferase"/>
    <property type="match status" value="1"/>
</dbReference>
<dbReference type="SUPFAM" id="SSF50677">
    <property type="entry name" value="ValRS/IleRS/LeuRS editing domain"/>
    <property type="match status" value="1"/>
</dbReference>
<dbReference type="PROSITE" id="PS00178">
    <property type="entry name" value="AA_TRNA_LIGASE_I"/>
    <property type="match status" value="1"/>
</dbReference>
<reference key="1">
    <citation type="submission" date="2007-10" db="EMBL/GenBank/DDBJ databases">
        <title>Complete sequence of Salinispora arenicola CNS-205.</title>
        <authorList>
            <consortium name="US DOE Joint Genome Institute"/>
            <person name="Copeland A."/>
            <person name="Lucas S."/>
            <person name="Lapidus A."/>
            <person name="Barry K."/>
            <person name="Glavina del Rio T."/>
            <person name="Dalin E."/>
            <person name="Tice H."/>
            <person name="Pitluck S."/>
            <person name="Foster B."/>
            <person name="Schmutz J."/>
            <person name="Larimer F."/>
            <person name="Land M."/>
            <person name="Hauser L."/>
            <person name="Kyrpides N."/>
            <person name="Ivanova N."/>
            <person name="Jensen P.R."/>
            <person name="Moore B.S."/>
            <person name="Penn K."/>
            <person name="Jenkins C."/>
            <person name="Udwary D."/>
            <person name="Xiang L."/>
            <person name="Gontang E."/>
            <person name="Richardson P."/>
        </authorList>
    </citation>
    <scope>NUCLEOTIDE SEQUENCE [LARGE SCALE GENOMIC DNA]</scope>
    <source>
        <strain>CNS-205</strain>
    </source>
</reference>
<name>SYV_SALAI</name>
<sequence>MPAKASLEGIEQVWSRVWEQNGTYRFDRSVTRDEVYSIDTPPPTVSGALHVGHVFSYTHADAIARFQRMRGKMVFYPMGWDDNGLPTERRVQNYYGVQCDPSLPYDPGYTPPTEPPGRPQPISRRNFVELCRNLTKIDEQAFEALWRHLGLSVDWSLTYATIDDRSRAISQRAFLRNLARGEAYLADAPTLWDVSFRTAVAQAELEDRERQGHYYRLSFTSAAGDTIHVETTRPELLPACVALVAHPDDKRYQHLFGSTAVTPVFRVPVPIKAHPLAQPDKGSGIAMICTFGDLTDVLWWRELALPTRPVMGRDGRLLPEPPPGITNAEAVAAYRTLAGLTAFSAKAKMVELLRASGDLAGDPQPTAQAVKFYEKGDKPLEIVTTRQWYVRNGGRNAQLRAALIRRGRELSWSPRFMRSRYENWVEGLAGDWIISRQRFFGVPIPVWYPLDDSGEPDYERPILPDDAALPVDPSSDTPTGYHDSQRHQPGGFMADPDVMDTWATSSLTPEIAGGWTVDDDLFGRVFPMDLRPQAHEIIRTWLFATMLRSHQEFDRLPWRTALLSGWILDPDRKKMSKSKGNSVVTPMSLLAEYGSDAVRYWAVSGRPGTDTAFDTGQMKIGRRLAIKILNATKFVLRFESPTLRAPHVAHVTEPLDRSMLARLADVVAAATTGFTQYDYTRSLECTEHFFWSFCDDYLELVKERAYGNPDDPAVRSAHAALALALRTLLRLFAPMLPFVTEEAWSWWQEGSVHRASWPARQELVGDADGVDRANRIDETNGSDEAVEDLLGLASGVLAAIRRAKSEAKQSMRASVARLTLRGRASDLAAFALVSRDVRAAGVVRDVDTAEADVPLTPEITLG</sequence>
<accession>A8LVI6</accession>
<organism>
    <name type="scientific">Salinispora arenicola (strain CNS-205)</name>
    <dbReference type="NCBI Taxonomy" id="391037"/>
    <lineage>
        <taxon>Bacteria</taxon>
        <taxon>Bacillati</taxon>
        <taxon>Actinomycetota</taxon>
        <taxon>Actinomycetes</taxon>
        <taxon>Micromonosporales</taxon>
        <taxon>Micromonosporaceae</taxon>
        <taxon>Salinispora</taxon>
    </lineage>
</organism>
<keyword id="KW-0030">Aminoacyl-tRNA synthetase</keyword>
<keyword id="KW-0067">ATP-binding</keyword>
<keyword id="KW-0963">Cytoplasm</keyword>
<keyword id="KW-0436">Ligase</keyword>
<keyword id="KW-0547">Nucleotide-binding</keyword>
<keyword id="KW-0648">Protein biosynthesis</keyword>
<evidence type="ECO:0000255" key="1">
    <source>
        <dbReference type="HAMAP-Rule" id="MF_02005"/>
    </source>
</evidence>
<evidence type="ECO:0000256" key="2">
    <source>
        <dbReference type="SAM" id="MobiDB-lite"/>
    </source>
</evidence>
<gene>
    <name evidence="1" type="primary">valS</name>
    <name type="ordered locus">Sare_0019</name>
</gene>
<comment type="function">
    <text evidence="1">Catalyzes the attachment of valine to tRNA(Val). As ValRS can inadvertently accommodate and process structurally similar amino acids such as threonine, to avoid such errors, it has a 'posttransfer' editing activity that hydrolyzes mischarged Thr-tRNA(Val) in a tRNA-dependent manner.</text>
</comment>
<comment type="catalytic activity">
    <reaction evidence="1">
        <text>tRNA(Val) + L-valine + ATP = L-valyl-tRNA(Val) + AMP + diphosphate</text>
        <dbReference type="Rhea" id="RHEA:10704"/>
        <dbReference type="Rhea" id="RHEA-COMP:9672"/>
        <dbReference type="Rhea" id="RHEA-COMP:9708"/>
        <dbReference type="ChEBI" id="CHEBI:30616"/>
        <dbReference type="ChEBI" id="CHEBI:33019"/>
        <dbReference type="ChEBI" id="CHEBI:57762"/>
        <dbReference type="ChEBI" id="CHEBI:78442"/>
        <dbReference type="ChEBI" id="CHEBI:78537"/>
        <dbReference type="ChEBI" id="CHEBI:456215"/>
        <dbReference type="EC" id="6.1.1.9"/>
    </reaction>
</comment>
<comment type="subunit">
    <text evidence="1">Monomer.</text>
</comment>
<comment type="subcellular location">
    <subcellularLocation>
        <location evidence="1">Cytoplasm</location>
    </subcellularLocation>
</comment>
<comment type="domain">
    <text evidence="1">ValRS has two distinct active sites: one for aminoacylation and one for editing. The misactivated threonine is translocated from the active site to the editing site.</text>
</comment>
<comment type="similarity">
    <text evidence="1">Belongs to the class-I aminoacyl-tRNA synthetase family. ValS type 2 subfamily.</text>
</comment>
<feature type="chain" id="PRO_1000088570" description="Valine--tRNA ligase">
    <location>
        <begin position="1"/>
        <end position="862"/>
    </location>
</feature>
<feature type="region of interest" description="Disordered" evidence="2">
    <location>
        <begin position="459"/>
        <end position="494"/>
    </location>
</feature>
<feature type="short sequence motif" description="'HIGH' region">
    <location>
        <begin position="43"/>
        <end position="53"/>
    </location>
</feature>
<feature type="short sequence motif" description="'KMSKS' region">
    <location>
        <begin position="574"/>
        <end position="578"/>
    </location>
</feature>
<feature type="binding site" evidence="1">
    <location>
        <position position="577"/>
    </location>
    <ligand>
        <name>ATP</name>
        <dbReference type="ChEBI" id="CHEBI:30616"/>
    </ligand>
</feature>
<proteinExistence type="inferred from homology"/>